<reference key="1">
    <citation type="submission" date="2006-10" db="EMBL/GenBank/DDBJ databases">
        <title>Estimating probability of parentage in U.S. beef and dairy cattle with single nucleotide polymorphisms.</title>
        <authorList>
            <person name="Heaton M.P."/>
            <person name="Clawson M.L."/>
            <person name="Snelling W.M."/>
            <person name="Keele J.W."/>
            <person name="Harhay G.P."/>
            <person name="Wiedmann R.T."/>
            <person name="Bennett G.L."/>
            <person name="Smith T.P.L."/>
            <person name="Stone R.T."/>
            <person name="Freking B.A."/>
            <person name="Van Tassell C.P."/>
            <person name="Sonstegard T.S."/>
            <person name="Gasbarre L.C."/>
            <person name="Moore S.S."/>
            <person name="Murdoch B."/>
            <person name="McKay S.D."/>
            <person name="Kalbfleisch T."/>
            <person name="Laegreid W.W."/>
        </authorList>
    </citation>
    <scope>NUCLEOTIDE SEQUENCE [GENOMIC DNA]</scope>
</reference>
<organism>
    <name type="scientific">Bos taurus</name>
    <name type="common">Bovine</name>
    <dbReference type="NCBI Taxonomy" id="9913"/>
    <lineage>
        <taxon>Eukaryota</taxon>
        <taxon>Metazoa</taxon>
        <taxon>Chordata</taxon>
        <taxon>Craniata</taxon>
        <taxon>Vertebrata</taxon>
        <taxon>Euteleostomi</taxon>
        <taxon>Mammalia</taxon>
        <taxon>Eutheria</taxon>
        <taxon>Laurasiatheria</taxon>
        <taxon>Artiodactyla</taxon>
        <taxon>Ruminantia</taxon>
        <taxon>Pecora</taxon>
        <taxon>Bovidae</taxon>
        <taxon>Bovinae</taxon>
        <taxon>Bos</taxon>
    </lineage>
</organism>
<evidence type="ECO:0000250" key="1"/>
<evidence type="ECO:0000255" key="2"/>
<evidence type="ECO:0000255" key="3">
    <source>
        <dbReference type="PROSITE-ProRule" id="PRU00114"/>
    </source>
</evidence>
<evidence type="ECO:0000255" key="4">
    <source>
        <dbReference type="PROSITE-ProRule" id="PRU00316"/>
    </source>
</evidence>
<evidence type="ECO:0000256" key="5">
    <source>
        <dbReference type="SAM" id="MobiDB-lite"/>
    </source>
</evidence>
<evidence type="ECO:0000305" key="6"/>
<protein>
    <recommendedName>
        <fullName>Leucine-rich repeat neuronal protein 1</fullName>
    </recommendedName>
    <alternativeName>
        <fullName>Neuronal leucine-rich repeat protein 1</fullName>
        <shortName>NLRR-1</shortName>
    </alternativeName>
</protein>
<sequence length="716" mass="80831">MARMSFVLAAYQMVLSLLMTSLTGSSLQSSECPQLCVCEIRPWFTPQSTYREATTVDCNDLRLTRIPSNLSSDTQVLLLQSNNIAKTVDELQQLFNLTELDFSQNNFTNIKEVGLANLTQLTTLHLEENQITEMNDYCLQDLSNLQELYINHNQISTISANAFSGLKNLLRLHLNSNKLKVIDSRWFDSTPNLEILMIGENPVIGILDMNFKPLSNLRSLVLAGMYLTDIPGNALVGLDSLESLSFYDNKLVKVPQLALQKVPNLKFLDLNKNPIHKIQEGDFKNMLRLKELGINNMGELVSVDRYALDNLPELTKLEATNNPKLSYIHRLAFRSVPALESLMLNNNALNAVYQKTVESLPNLREISIHSNPLRCDCVIHWINSNKTNIRFMEPLSMFCAMPPEYRGQQVKEVLIQDSSEQCLPMISHDTFPNHLNMDIGTTVFLDCRAMAEPEPEIYWVTPLGNKITVETLSEKYKLSSEGTLEISKIQIEDSGRYTCVAQNVEGADTRVVMIKVNGTLLDGAQVLKIYVKQTESHSILVSWKVNSNVMTSNLKWSSATMKIDNPHITYTARVPVDVHEYNLTHLQPSTDYEVCLTVSNIHQQTQKSCVNVTTKNAAFALDISDQETSTALAAVMGSMFAVISLASIAVYIAKRFKRKNYHHSLKKYMQKTSSIPLNELYPPLINLWEGDSEKDKDGTADTKPTQVDTSRSYYMW</sequence>
<gene>
    <name type="primary">LRRN1</name>
</gene>
<name>LRRN1_BOVIN</name>
<accession>A0N0X6</accession>
<dbReference type="EMBL" id="EF093509">
    <property type="protein sequence ID" value="ABK35137.1"/>
    <property type="molecule type" value="Genomic_DNA"/>
</dbReference>
<dbReference type="RefSeq" id="NP_001074207.1">
    <property type="nucleotide sequence ID" value="NM_001080738.1"/>
</dbReference>
<dbReference type="RefSeq" id="XP_005222725.1">
    <property type="nucleotide sequence ID" value="XM_005222668.5"/>
</dbReference>
<dbReference type="RefSeq" id="XP_005222726.1">
    <property type="nucleotide sequence ID" value="XM_005222669.5"/>
</dbReference>
<dbReference type="SMR" id="A0N0X6"/>
<dbReference type="FunCoup" id="A0N0X6">
    <property type="interactions" value="735"/>
</dbReference>
<dbReference type="STRING" id="9913.ENSBTAP00000001560"/>
<dbReference type="GlyCosmos" id="A0N0X6">
    <property type="glycosylation" value="8 sites, No reported glycans"/>
</dbReference>
<dbReference type="GlyGen" id="A0N0X6">
    <property type="glycosylation" value="8 sites"/>
</dbReference>
<dbReference type="PaxDb" id="9913-ENSBTAP00000001560"/>
<dbReference type="Ensembl" id="ENSBTAT00000001560.7">
    <property type="protein sequence ID" value="ENSBTAP00000001560.5"/>
    <property type="gene ID" value="ENSBTAG00000001176.7"/>
</dbReference>
<dbReference type="Ensembl" id="ENSBTAT00000121612.1">
    <property type="protein sequence ID" value="ENSBTAP00000098048.1"/>
    <property type="gene ID" value="ENSBTAG00000001176.7"/>
</dbReference>
<dbReference type="Ensembl" id="ENSBTAT00000127636.1">
    <property type="protein sequence ID" value="ENSBTAP00000077675.1"/>
    <property type="gene ID" value="ENSBTAG00000001176.7"/>
</dbReference>
<dbReference type="Ensembl" id="ENSBTAT00000135270.1">
    <property type="protein sequence ID" value="ENSBTAP00000093807.1"/>
    <property type="gene ID" value="ENSBTAG00000001176.7"/>
</dbReference>
<dbReference type="GeneID" id="539619"/>
<dbReference type="KEGG" id="bta:539619"/>
<dbReference type="CTD" id="57633"/>
<dbReference type="VEuPathDB" id="HostDB:ENSBTAG00000001176"/>
<dbReference type="VGNC" id="VGNC:31039">
    <property type="gene designation" value="LRRN1"/>
</dbReference>
<dbReference type="eggNOG" id="KOG0619">
    <property type="taxonomic scope" value="Eukaryota"/>
</dbReference>
<dbReference type="GeneTree" id="ENSGT00940000157154"/>
<dbReference type="HOGENOM" id="CLU_000288_18_18_1"/>
<dbReference type="InParanoid" id="A0N0X6"/>
<dbReference type="OMA" id="ANQCLPM"/>
<dbReference type="OrthoDB" id="266138at2759"/>
<dbReference type="TreeFam" id="TF334360"/>
<dbReference type="Proteomes" id="UP000009136">
    <property type="component" value="Chromosome 22"/>
</dbReference>
<dbReference type="Bgee" id="ENSBTAG00000001176">
    <property type="expression patterns" value="Expressed in floor plate of diencephalon and 83 other cell types or tissues"/>
</dbReference>
<dbReference type="GO" id="GO:0031012">
    <property type="term" value="C:extracellular matrix"/>
    <property type="evidence" value="ECO:0000318"/>
    <property type="project" value="GO_Central"/>
</dbReference>
<dbReference type="GO" id="GO:0005615">
    <property type="term" value="C:extracellular space"/>
    <property type="evidence" value="ECO:0000318"/>
    <property type="project" value="GO_Central"/>
</dbReference>
<dbReference type="GO" id="GO:0016020">
    <property type="term" value="C:membrane"/>
    <property type="evidence" value="ECO:0007669"/>
    <property type="project" value="UniProtKB-SubCell"/>
</dbReference>
<dbReference type="GO" id="GO:0051965">
    <property type="term" value="P:positive regulation of synapse assembly"/>
    <property type="evidence" value="ECO:0007669"/>
    <property type="project" value="Ensembl"/>
</dbReference>
<dbReference type="CDD" id="cd00063">
    <property type="entry name" value="FN3"/>
    <property type="match status" value="1"/>
</dbReference>
<dbReference type="FunFam" id="2.60.40.10:FF:000355">
    <property type="entry name" value="Leucine-rich repeat neuronal protein 1"/>
    <property type="match status" value="1"/>
</dbReference>
<dbReference type="FunFam" id="2.60.40.10:FF:000481">
    <property type="entry name" value="Leucine-rich repeat neuronal protein 1"/>
    <property type="match status" value="1"/>
</dbReference>
<dbReference type="FunFam" id="3.80.10.10:FF:000056">
    <property type="entry name" value="Leucine-rich repeat neuronal protein 1"/>
    <property type="match status" value="1"/>
</dbReference>
<dbReference type="FunFam" id="3.80.10.10:FF:000074">
    <property type="entry name" value="Leucine-rich repeat neuronal protein 1"/>
    <property type="match status" value="1"/>
</dbReference>
<dbReference type="FunFam" id="3.80.10.10:FF:000090">
    <property type="entry name" value="Leucine-rich repeat neuronal protein 1"/>
    <property type="match status" value="1"/>
</dbReference>
<dbReference type="Gene3D" id="2.60.40.10">
    <property type="entry name" value="Immunoglobulins"/>
    <property type="match status" value="2"/>
</dbReference>
<dbReference type="Gene3D" id="3.80.10.10">
    <property type="entry name" value="Ribonuclease Inhibitor"/>
    <property type="match status" value="3"/>
</dbReference>
<dbReference type="InterPro" id="IPR000483">
    <property type="entry name" value="Cys-rich_flank_reg_C"/>
</dbReference>
<dbReference type="InterPro" id="IPR050328">
    <property type="entry name" value="Dev_Immune_Receptor"/>
</dbReference>
<dbReference type="InterPro" id="IPR003961">
    <property type="entry name" value="FN3_dom"/>
</dbReference>
<dbReference type="InterPro" id="IPR036116">
    <property type="entry name" value="FN3_sf"/>
</dbReference>
<dbReference type="InterPro" id="IPR007110">
    <property type="entry name" value="Ig-like_dom"/>
</dbReference>
<dbReference type="InterPro" id="IPR036179">
    <property type="entry name" value="Ig-like_dom_sf"/>
</dbReference>
<dbReference type="InterPro" id="IPR013783">
    <property type="entry name" value="Ig-like_fold"/>
</dbReference>
<dbReference type="InterPro" id="IPR013098">
    <property type="entry name" value="Ig_I-set"/>
</dbReference>
<dbReference type="InterPro" id="IPR003599">
    <property type="entry name" value="Ig_sub"/>
</dbReference>
<dbReference type="InterPro" id="IPR003598">
    <property type="entry name" value="Ig_sub2"/>
</dbReference>
<dbReference type="InterPro" id="IPR001611">
    <property type="entry name" value="Leu-rich_rpt"/>
</dbReference>
<dbReference type="InterPro" id="IPR003591">
    <property type="entry name" value="Leu-rich_rpt_typical-subtyp"/>
</dbReference>
<dbReference type="InterPro" id="IPR032675">
    <property type="entry name" value="LRR_dom_sf"/>
</dbReference>
<dbReference type="PANTHER" id="PTHR24373:SF97">
    <property type="entry name" value="LEUCINE-RICH REPEAT NEURONAL PROTEIN 1"/>
    <property type="match status" value="1"/>
</dbReference>
<dbReference type="PANTHER" id="PTHR24373">
    <property type="entry name" value="SLIT RELATED LEUCINE-RICH REPEAT NEURONAL PROTEIN"/>
    <property type="match status" value="1"/>
</dbReference>
<dbReference type="Pfam" id="PF07679">
    <property type="entry name" value="I-set"/>
    <property type="match status" value="1"/>
</dbReference>
<dbReference type="Pfam" id="PF13855">
    <property type="entry name" value="LRR_8"/>
    <property type="match status" value="3"/>
</dbReference>
<dbReference type="Pfam" id="PF01463">
    <property type="entry name" value="LRRCT"/>
    <property type="match status" value="1"/>
</dbReference>
<dbReference type="SMART" id="SM00409">
    <property type="entry name" value="IG"/>
    <property type="match status" value="1"/>
</dbReference>
<dbReference type="SMART" id="SM00408">
    <property type="entry name" value="IGc2"/>
    <property type="match status" value="1"/>
</dbReference>
<dbReference type="SMART" id="SM00365">
    <property type="entry name" value="LRR_SD22"/>
    <property type="match status" value="4"/>
</dbReference>
<dbReference type="SMART" id="SM00369">
    <property type="entry name" value="LRR_TYP"/>
    <property type="match status" value="9"/>
</dbReference>
<dbReference type="SMART" id="SM00082">
    <property type="entry name" value="LRRCT"/>
    <property type="match status" value="1"/>
</dbReference>
<dbReference type="SUPFAM" id="SSF49265">
    <property type="entry name" value="Fibronectin type III"/>
    <property type="match status" value="1"/>
</dbReference>
<dbReference type="SUPFAM" id="SSF48726">
    <property type="entry name" value="Immunoglobulin"/>
    <property type="match status" value="1"/>
</dbReference>
<dbReference type="SUPFAM" id="SSF52058">
    <property type="entry name" value="L domain-like"/>
    <property type="match status" value="1"/>
</dbReference>
<dbReference type="PROSITE" id="PS50853">
    <property type="entry name" value="FN3"/>
    <property type="match status" value="1"/>
</dbReference>
<dbReference type="PROSITE" id="PS50835">
    <property type="entry name" value="IG_LIKE"/>
    <property type="match status" value="1"/>
</dbReference>
<dbReference type="PROSITE" id="PS51450">
    <property type="entry name" value="LRR"/>
    <property type="match status" value="9"/>
</dbReference>
<comment type="subcellular location">
    <subcellularLocation>
        <location evidence="6">Membrane</location>
        <topology evidence="6">Single-pass type I membrane protein</topology>
    </subcellularLocation>
</comment>
<proteinExistence type="inferred from homology"/>
<keyword id="KW-1015">Disulfide bond</keyword>
<keyword id="KW-0325">Glycoprotein</keyword>
<keyword id="KW-0393">Immunoglobulin domain</keyword>
<keyword id="KW-0433">Leucine-rich repeat</keyword>
<keyword id="KW-0472">Membrane</keyword>
<keyword id="KW-1185">Reference proteome</keyword>
<keyword id="KW-0677">Repeat</keyword>
<keyword id="KW-0732">Signal</keyword>
<keyword id="KW-0812">Transmembrane</keyword>
<keyword id="KW-1133">Transmembrane helix</keyword>
<feature type="signal peptide" evidence="1">
    <location>
        <begin position="1"/>
        <end position="25"/>
    </location>
</feature>
<feature type="chain" id="PRO_0000273549" description="Leucine-rich repeat neuronal protein 1">
    <location>
        <begin position="26"/>
        <end position="716"/>
    </location>
</feature>
<feature type="topological domain" description="Extracellular" evidence="2">
    <location>
        <begin position="26"/>
        <end position="631"/>
    </location>
</feature>
<feature type="transmembrane region" description="Helical" evidence="2">
    <location>
        <begin position="632"/>
        <end position="652"/>
    </location>
</feature>
<feature type="topological domain" description="Cytoplasmic" evidence="2">
    <location>
        <begin position="653"/>
        <end position="716"/>
    </location>
</feature>
<feature type="domain" description="LRRNT">
    <location>
        <begin position="26"/>
        <end position="72"/>
    </location>
</feature>
<feature type="repeat" description="LRR 1">
    <location>
        <begin position="73"/>
        <end position="95"/>
    </location>
</feature>
<feature type="repeat" description="LRR 2">
    <location>
        <begin position="96"/>
        <end position="117"/>
    </location>
</feature>
<feature type="repeat" description="LRR 3">
    <location>
        <begin position="120"/>
        <end position="141"/>
    </location>
</feature>
<feature type="repeat" description="LRR 4">
    <location>
        <begin position="144"/>
        <end position="165"/>
    </location>
</feature>
<feature type="repeat" description="LRR 5">
    <location>
        <begin position="168"/>
        <end position="189"/>
    </location>
</feature>
<feature type="repeat" description="LRR 6">
    <location>
        <begin position="192"/>
        <end position="213"/>
    </location>
</feature>
<feature type="repeat" description="LRR 7">
    <location>
        <begin position="216"/>
        <end position="237"/>
    </location>
</feature>
<feature type="repeat" description="LRR 8">
    <location>
        <begin position="240"/>
        <end position="261"/>
    </location>
</feature>
<feature type="repeat" description="LRR 9">
    <location>
        <begin position="264"/>
        <end position="285"/>
    </location>
</feature>
<feature type="domain" description="LRRCT">
    <location>
        <begin position="371"/>
        <end position="424"/>
    </location>
</feature>
<feature type="domain" description="Ig-like C2-type">
    <location>
        <begin position="424"/>
        <end position="515"/>
    </location>
</feature>
<feature type="domain" description="Fibronectin type-III" evidence="4">
    <location>
        <begin position="525"/>
        <end position="617"/>
    </location>
</feature>
<feature type="region of interest" description="Disordered" evidence="5">
    <location>
        <begin position="691"/>
        <end position="716"/>
    </location>
</feature>
<feature type="compositionally biased region" description="Basic and acidic residues" evidence="5">
    <location>
        <begin position="691"/>
        <end position="700"/>
    </location>
</feature>
<feature type="compositionally biased region" description="Polar residues" evidence="5">
    <location>
        <begin position="702"/>
        <end position="716"/>
    </location>
</feature>
<feature type="glycosylation site" description="N-linked (GlcNAc...) asparagine" evidence="2">
    <location>
        <position position="69"/>
    </location>
</feature>
<feature type="glycosylation site" description="N-linked (GlcNAc...) asparagine" evidence="2">
    <location>
        <position position="96"/>
    </location>
</feature>
<feature type="glycosylation site" description="N-linked (GlcNAc...) asparagine" evidence="2">
    <location>
        <position position="106"/>
    </location>
</feature>
<feature type="glycosylation site" description="N-linked (GlcNAc...) asparagine" evidence="2">
    <location>
        <position position="117"/>
    </location>
</feature>
<feature type="glycosylation site" description="N-linked (GlcNAc...) asparagine" evidence="2">
    <location>
        <position position="385"/>
    </location>
</feature>
<feature type="glycosylation site" description="N-linked (GlcNAc...) asparagine" evidence="2">
    <location>
        <position position="517"/>
    </location>
</feature>
<feature type="glycosylation site" description="N-linked (GlcNAc...) asparagine" evidence="2">
    <location>
        <position position="582"/>
    </location>
</feature>
<feature type="glycosylation site" description="N-linked (GlcNAc...) asparagine" evidence="2">
    <location>
        <position position="611"/>
    </location>
</feature>
<feature type="disulfide bond" evidence="3">
    <location>
        <begin position="447"/>
        <end position="499"/>
    </location>
</feature>